<accession>Q2YSD7</accession>
<evidence type="ECO:0000255" key="1">
    <source>
        <dbReference type="HAMAP-Rule" id="MF_00602"/>
    </source>
</evidence>
<gene>
    <name evidence="1" type="primary">mcsB</name>
    <name type="ordered locus">SAB0474</name>
</gene>
<keyword id="KW-0067">ATP-binding</keyword>
<keyword id="KW-0418">Kinase</keyword>
<keyword id="KW-0547">Nucleotide-binding</keyword>
<keyword id="KW-0808">Transferase</keyword>
<protein>
    <recommendedName>
        <fullName evidence="1">Protein-arginine kinase</fullName>
        <ecNumber evidence="1">2.7.14.1</ecNumber>
    </recommendedName>
</protein>
<dbReference type="EC" id="2.7.14.1" evidence="1"/>
<dbReference type="EMBL" id="AJ938182">
    <property type="protein sequence ID" value="CAI80162.1"/>
    <property type="molecule type" value="Genomic_DNA"/>
</dbReference>
<dbReference type="RefSeq" id="WP_000149503.1">
    <property type="nucleotide sequence ID" value="NC_007622.1"/>
</dbReference>
<dbReference type="SMR" id="Q2YSD7"/>
<dbReference type="KEGG" id="sab:SAB0474"/>
<dbReference type="HOGENOM" id="CLU_066591_1_0_9"/>
<dbReference type="GO" id="GO:0005615">
    <property type="term" value="C:extracellular space"/>
    <property type="evidence" value="ECO:0007669"/>
    <property type="project" value="TreeGrafter"/>
</dbReference>
<dbReference type="GO" id="GO:0005524">
    <property type="term" value="F:ATP binding"/>
    <property type="evidence" value="ECO:0007669"/>
    <property type="project" value="UniProtKB-KW"/>
</dbReference>
<dbReference type="GO" id="GO:0004111">
    <property type="term" value="F:creatine kinase activity"/>
    <property type="evidence" value="ECO:0007669"/>
    <property type="project" value="InterPro"/>
</dbReference>
<dbReference type="GO" id="GO:0004672">
    <property type="term" value="F:protein kinase activity"/>
    <property type="evidence" value="ECO:0007669"/>
    <property type="project" value="UniProtKB-UniRule"/>
</dbReference>
<dbReference type="GO" id="GO:0046314">
    <property type="term" value="P:phosphocreatine biosynthetic process"/>
    <property type="evidence" value="ECO:0007669"/>
    <property type="project" value="InterPro"/>
</dbReference>
<dbReference type="CDD" id="cd07930">
    <property type="entry name" value="bacterial_phosphagen_kinase"/>
    <property type="match status" value="1"/>
</dbReference>
<dbReference type="FunFam" id="3.30.590.10:FF:000007">
    <property type="entry name" value="Protein-arginine kinase"/>
    <property type="match status" value="1"/>
</dbReference>
<dbReference type="Gene3D" id="3.30.590.10">
    <property type="entry name" value="Glutamine synthetase/guanido kinase, catalytic domain"/>
    <property type="match status" value="1"/>
</dbReference>
<dbReference type="HAMAP" id="MF_00602">
    <property type="entry name" value="Prot_Arg_kinase"/>
    <property type="match status" value="1"/>
</dbReference>
<dbReference type="InterPro" id="IPR023660">
    <property type="entry name" value="Arg_Kinase"/>
</dbReference>
<dbReference type="InterPro" id="IPR000749">
    <property type="entry name" value="ATP-guanido_PTrfase"/>
</dbReference>
<dbReference type="InterPro" id="IPR022415">
    <property type="entry name" value="ATP-guanido_PTrfase_AS"/>
</dbReference>
<dbReference type="InterPro" id="IPR022414">
    <property type="entry name" value="ATP-guanido_PTrfase_cat"/>
</dbReference>
<dbReference type="InterPro" id="IPR014746">
    <property type="entry name" value="Gln_synth/guanido_kin_cat_dom"/>
</dbReference>
<dbReference type="NCBIfam" id="NF002193">
    <property type="entry name" value="PRK01059.1-3"/>
    <property type="match status" value="1"/>
</dbReference>
<dbReference type="PANTHER" id="PTHR11547:SF38">
    <property type="entry name" value="ARGININE KINASE 1-RELATED"/>
    <property type="match status" value="1"/>
</dbReference>
<dbReference type="PANTHER" id="PTHR11547">
    <property type="entry name" value="ARGININE OR CREATINE KINASE"/>
    <property type="match status" value="1"/>
</dbReference>
<dbReference type="Pfam" id="PF00217">
    <property type="entry name" value="ATP-gua_Ptrans"/>
    <property type="match status" value="1"/>
</dbReference>
<dbReference type="SUPFAM" id="SSF55931">
    <property type="entry name" value="Glutamine synthetase/guanido kinase"/>
    <property type="match status" value="1"/>
</dbReference>
<dbReference type="PROSITE" id="PS00112">
    <property type="entry name" value="PHOSPHAGEN_KINASE"/>
    <property type="match status" value="1"/>
</dbReference>
<dbReference type="PROSITE" id="PS51510">
    <property type="entry name" value="PHOSPHAGEN_KINASE_C"/>
    <property type="match status" value="1"/>
</dbReference>
<comment type="function">
    <text evidence="1">Catalyzes the specific phosphorylation of arginine residues in proteins.</text>
</comment>
<comment type="catalytic activity">
    <reaction evidence="1">
        <text>L-arginyl-[protein] + ATP = N(omega)-phospho-L-arginyl-[protein] + ADP + H(+)</text>
        <dbReference type="Rhea" id="RHEA:43384"/>
        <dbReference type="Rhea" id="RHEA-COMP:10532"/>
        <dbReference type="Rhea" id="RHEA-COMP:10533"/>
        <dbReference type="ChEBI" id="CHEBI:15378"/>
        <dbReference type="ChEBI" id="CHEBI:29965"/>
        <dbReference type="ChEBI" id="CHEBI:30616"/>
        <dbReference type="ChEBI" id="CHEBI:83226"/>
        <dbReference type="ChEBI" id="CHEBI:456216"/>
        <dbReference type="EC" id="2.7.14.1"/>
    </reaction>
</comment>
<comment type="similarity">
    <text evidence="1">Belongs to the ATP:guanido phosphotransferase family.</text>
</comment>
<name>MCSB_STAAB</name>
<feature type="chain" id="PRO_1000025880" description="Protein-arginine kinase">
    <location>
        <begin position="1"/>
        <end position="335"/>
    </location>
</feature>
<feature type="domain" description="Phosphagen kinase C-terminal" evidence="1">
    <location>
        <begin position="21"/>
        <end position="244"/>
    </location>
</feature>
<feature type="binding site" evidence="1">
    <location>
        <begin position="24"/>
        <end position="28"/>
    </location>
    <ligand>
        <name>ATP</name>
        <dbReference type="ChEBI" id="CHEBI:30616"/>
    </ligand>
</feature>
<feature type="binding site" evidence="1">
    <location>
        <position position="82"/>
    </location>
    <ligand>
        <name>ATP</name>
        <dbReference type="ChEBI" id="CHEBI:30616"/>
    </ligand>
</feature>
<feature type="binding site" evidence="1">
    <location>
        <position position="115"/>
    </location>
    <ligand>
        <name>ATP</name>
        <dbReference type="ChEBI" id="CHEBI:30616"/>
    </ligand>
</feature>
<feature type="binding site" evidence="1">
    <location>
        <begin position="166"/>
        <end position="170"/>
    </location>
    <ligand>
        <name>ATP</name>
        <dbReference type="ChEBI" id="CHEBI:30616"/>
    </ligand>
</feature>
<feature type="binding site" evidence="1">
    <location>
        <begin position="197"/>
        <end position="202"/>
    </location>
    <ligand>
        <name>ATP</name>
        <dbReference type="ChEBI" id="CHEBI:30616"/>
    </ligand>
</feature>
<sequence>MTHNIHDNISQWMKSNEETPIVMSSRIRLARNLENHVHPLMYATENDGFRVINEVQDALPNFELMRLDQMDQQSKMKMVAKHLISPELIKQPAAAVLVNDDESLSVMINEEDHIRIQAMGTDTTLQALYNQASSIDDELDRSLDISYDEQLGYLTTCPTNIGTGMRASVMLHLPGLSIMKRMTRIAQTINRFGYTIRGIYGEGSQVYGHTYQVSNQLTLGKSELEIIETLTEVVNQIIHEEKQIRQKLDTYNQLETQDRVFRSLGILQNCRMITMEEASYRLSEVKLGIDLNYIELQNFKFNELMVAIQSPFLLDEEDDKSVKEKRADILREHIK</sequence>
<organism>
    <name type="scientific">Staphylococcus aureus (strain bovine RF122 / ET3-1)</name>
    <dbReference type="NCBI Taxonomy" id="273036"/>
    <lineage>
        <taxon>Bacteria</taxon>
        <taxon>Bacillati</taxon>
        <taxon>Bacillota</taxon>
        <taxon>Bacilli</taxon>
        <taxon>Bacillales</taxon>
        <taxon>Staphylococcaceae</taxon>
        <taxon>Staphylococcus</taxon>
    </lineage>
</organism>
<reference key="1">
    <citation type="journal article" date="2007" name="PLoS ONE">
        <title>Molecular correlates of host specialization in Staphylococcus aureus.</title>
        <authorList>
            <person name="Herron-Olson L."/>
            <person name="Fitzgerald J.R."/>
            <person name="Musser J.M."/>
            <person name="Kapur V."/>
        </authorList>
    </citation>
    <scope>NUCLEOTIDE SEQUENCE [LARGE SCALE GENOMIC DNA]</scope>
    <source>
        <strain>bovine RF122 / ET3-1</strain>
    </source>
</reference>
<proteinExistence type="inferred from homology"/>